<feature type="chain" id="PRO_0000248771" description="Proline--tRNA ligase">
    <location>
        <begin position="1"/>
        <end position="566"/>
    </location>
</feature>
<accession>Q4L5W5</accession>
<protein>
    <recommendedName>
        <fullName evidence="1">Proline--tRNA ligase</fullName>
        <ecNumber evidence="1">6.1.1.15</ecNumber>
    </recommendedName>
    <alternativeName>
        <fullName evidence="1">Prolyl-tRNA synthetase</fullName>
        <shortName evidence="1">ProRS</shortName>
    </alternativeName>
</protein>
<name>SYP_STAHJ</name>
<gene>
    <name evidence="1" type="primary">proS</name>
    <name type="ordered locus">SH1651</name>
</gene>
<reference key="1">
    <citation type="journal article" date="2005" name="J. Bacteriol.">
        <title>Whole-genome sequencing of Staphylococcus haemolyticus uncovers the extreme plasticity of its genome and the evolution of human-colonizing staphylococcal species.</title>
        <authorList>
            <person name="Takeuchi F."/>
            <person name="Watanabe S."/>
            <person name="Baba T."/>
            <person name="Yuzawa H."/>
            <person name="Ito T."/>
            <person name="Morimoto Y."/>
            <person name="Kuroda M."/>
            <person name="Cui L."/>
            <person name="Takahashi M."/>
            <person name="Ankai A."/>
            <person name="Baba S."/>
            <person name="Fukui S."/>
            <person name="Lee J.C."/>
            <person name="Hiramatsu K."/>
        </authorList>
    </citation>
    <scope>NUCLEOTIDE SEQUENCE [LARGE SCALE GENOMIC DNA]</scope>
    <source>
        <strain>JCSC1435</strain>
    </source>
</reference>
<proteinExistence type="inferred from homology"/>
<organism>
    <name type="scientific">Staphylococcus haemolyticus (strain JCSC1435)</name>
    <dbReference type="NCBI Taxonomy" id="279808"/>
    <lineage>
        <taxon>Bacteria</taxon>
        <taxon>Bacillati</taxon>
        <taxon>Bacillota</taxon>
        <taxon>Bacilli</taxon>
        <taxon>Bacillales</taxon>
        <taxon>Staphylococcaceae</taxon>
        <taxon>Staphylococcus</taxon>
    </lineage>
</organism>
<sequence>MKQSKVFIPTRRDVPAEAEALSHQLLLKAGLIKQSTSGIYSYLPLASRVLNNISKIIREEMESIDAVEILMPALQQAELWEESGRWGAYGPELMRLKDRNGREFALGPTHEEVVTSIVRDELKSYKQLPLTLFQIQSKFRDEKRPRFGLLRGREFIMKDAYSFHADEASLDETYQDMYNAYDRIFKRVGINARPVVADSGAIGGNHTHEFMALSEIGEDTIVYSEHSDYAANIEKAEVVYHPNEKHTEVAELEKVETPNVKTAQELADFLNRPVDEIVKSMIFKIDGEFIMFLIRGHHELNDVKVKAFFETDNVEMATQEEIVNLLGANPGSLGPVHDKDIRIFADNYVRDLNNLVVGANEDGSHYINANLDRDFKVDEFGDFRFILEGETLSDGSGEAKFAEGIEVGQVFKLGTKYSEAMNATFLDNQGKAKPLIMGCYGIGVSRTLSAIVEQNNDENGIIWPKSVTPFDLHLITINPKKDEQLELGDQLYKELQQQYDVLYDDRKDRAGVKFNDADLIGLPIRIVVGKNASEGIVEVKVRQTGESEEVHINDLNTHIATLYSNL</sequence>
<dbReference type="EC" id="6.1.1.15" evidence="1"/>
<dbReference type="EMBL" id="AP006716">
    <property type="protein sequence ID" value="BAE04960.1"/>
    <property type="molecule type" value="Genomic_DNA"/>
</dbReference>
<dbReference type="RefSeq" id="WP_011275937.1">
    <property type="nucleotide sequence ID" value="NC_007168.1"/>
</dbReference>
<dbReference type="SMR" id="Q4L5W5"/>
<dbReference type="KEGG" id="sha:SH1651"/>
<dbReference type="eggNOG" id="COG0442">
    <property type="taxonomic scope" value="Bacteria"/>
</dbReference>
<dbReference type="HOGENOM" id="CLU_016739_0_0_9"/>
<dbReference type="OrthoDB" id="9809052at2"/>
<dbReference type="Proteomes" id="UP000000543">
    <property type="component" value="Chromosome"/>
</dbReference>
<dbReference type="GO" id="GO:0005829">
    <property type="term" value="C:cytosol"/>
    <property type="evidence" value="ECO:0007669"/>
    <property type="project" value="TreeGrafter"/>
</dbReference>
<dbReference type="GO" id="GO:0002161">
    <property type="term" value="F:aminoacyl-tRNA deacylase activity"/>
    <property type="evidence" value="ECO:0007669"/>
    <property type="project" value="InterPro"/>
</dbReference>
<dbReference type="GO" id="GO:0005524">
    <property type="term" value="F:ATP binding"/>
    <property type="evidence" value="ECO:0007669"/>
    <property type="project" value="UniProtKB-UniRule"/>
</dbReference>
<dbReference type="GO" id="GO:0140096">
    <property type="term" value="F:catalytic activity, acting on a protein"/>
    <property type="evidence" value="ECO:0007669"/>
    <property type="project" value="UniProtKB-ARBA"/>
</dbReference>
<dbReference type="GO" id="GO:0004827">
    <property type="term" value="F:proline-tRNA ligase activity"/>
    <property type="evidence" value="ECO:0007669"/>
    <property type="project" value="UniProtKB-UniRule"/>
</dbReference>
<dbReference type="GO" id="GO:0016740">
    <property type="term" value="F:transferase activity"/>
    <property type="evidence" value="ECO:0007669"/>
    <property type="project" value="UniProtKB-ARBA"/>
</dbReference>
<dbReference type="GO" id="GO:0006433">
    <property type="term" value="P:prolyl-tRNA aminoacylation"/>
    <property type="evidence" value="ECO:0007669"/>
    <property type="project" value="UniProtKB-UniRule"/>
</dbReference>
<dbReference type="CDD" id="cd04334">
    <property type="entry name" value="ProRS-INS"/>
    <property type="match status" value="1"/>
</dbReference>
<dbReference type="CDD" id="cd00861">
    <property type="entry name" value="ProRS_anticodon_short"/>
    <property type="match status" value="1"/>
</dbReference>
<dbReference type="CDD" id="cd00779">
    <property type="entry name" value="ProRS_core_prok"/>
    <property type="match status" value="1"/>
</dbReference>
<dbReference type="FunFam" id="3.30.930.10:FF:000043">
    <property type="entry name" value="Proline--tRNA ligase"/>
    <property type="match status" value="1"/>
</dbReference>
<dbReference type="FunFam" id="3.40.50.800:FF:000011">
    <property type="entry name" value="Proline--tRNA ligase"/>
    <property type="match status" value="1"/>
</dbReference>
<dbReference type="Gene3D" id="3.40.50.800">
    <property type="entry name" value="Anticodon-binding domain"/>
    <property type="match status" value="1"/>
</dbReference>
<dbReference type="Gene3D" id="3.30.930.10">
    <property type="entry name" value="Bira Bifunctional Protein, Domain 2"/>
    <property type="match status" value="2"/>
</dbReference>
<dbReference type="HAMAP" id="MF_01569">
    <property type="entry name" value="Pro_tRNA_synth_type1"/>
    <property type="match status" value="1"/>
</dbReference>
<dbReference type="InterPro" id="IPR002314">
    <property type="entry name" value="aa-tRNA-synt_IIb"/>
</dbReference>
<dbReference type="InterPro" id="IPR006195">
    <property type="entry name" value="aa-tRNA-synth_II"/>
</dbReference>
<dbReference type="InterPro" id="IPR045864">
    <property type="entry name" value="aa-tRNA-synth_II/BPL/LPL"/>
</dbReference>
<dbReference type="InterPro" id="IPR004154">
    <property type="entry name" value="Anticodon-bd"/>
</dbReference>
<dbReference type="InterPro" id="IPR036621">
    <property type="entry name" value="Anticodon-bd_dom_sf"/>
</dbReference>
<dbReference type="InterPro" id="IPR002316">
    <property type="entry name" value="Pro-tRNA-ligase_IIa"/>
</dbReference>
<dbReference type="InterPro" id="IPR004500">
    <property type="entry name" value="Pro-tRNA-synth_IIa_bac-type"/>
</dbReference>
<dbReference type="InterPro" id="IPR023717">
    <property type="entry name" value="Pro-tRNA-Synthase_IIa_type1"/>
</dbReference>
<dbReference type="InterPro" id="IPR050062">
    <property type="entry name" value="Pro-tRNA_synthetase"/>
</dbReference>
<dbReference type="InterPro" id="IPR044140">
    <property type="entry name" value="ProRS_anticodon_short"/>
</dbReference>
<dbReference type="InterPro" id="IPR033730">
    <property type="entry name" value="ProRS_core_prok"/>
</dbReference>
<dbReference type="InterPro" id="IPR036754">
    <property type="entry name" value="YbaK/aa-tRNA-synt-asso_dom_sf"/>
</dbReference>
<dbReference type="InterPro" id="IPR007214">
    <property type="entry name" value="YbaK/aa-tRNA-synth-assoc-dom"/>
</dbReference>
<dbReference type="NCBIfam" id="NF006625">
    <property type="entry name" value="PRK09194.1"/>
    <property type="match status" value="1"/>
</dbReference>
<dbReference type="NCBIfam" id="TIGR00409">
    <property type="entry name" value="proS_fam_II"/>
    <property type="match status" value="1"/>
</dbReference>
<dbReference type="PANTHER" id="PTHR42753">
    <property type="entry name" value="MITOCHONDRIAL RIBOSOME PROTEIN L39/PROLYL-TRNA LIGASE FAMILY MEMBER"/>
    <property type="match status" value="1"/>
</dbReference>
<dbReference type="PANTHER" id="PTHR42753:SF2">
    <property type="entry name" value="PROLINE--TRNA LIGASE"/>
    <property type="match status" value="1"/>
</dbReference>
<dbReference type="Pfam" id="PF03129">
    <property type="entry name" value="HGTP_anticodon"/>
    <property type="match status" value="1"/>
</dbReference>
<dbReference type="Pfam" id="PF00587">
    <property type="entry name" value="tRNA-synt_2b"/>
    <property type="match status" value="1"/>
</dbReference>
<dbReference type="Pfam" id="PF04073">
    <property type="entry name" value="tRNA_edit"/>
    <property type="match status" value="1"/>
</dbReference>
<dbReference type="PRINTS" id="PR01046">
    <property type="entry name" value="TRNASYNTHPRO"/>
</dbReference>
<dbReference type="SUPFAM" id="SSF52954">
    <property type="entry name" value="Class II aaRS ABD-related"/>
    <property type="match status" value="1"/>
</dbReference>
<dbReference type="SUPFAM" id="SSF55681">
    <property type="entry name" value="Class II aaRS and biotin synthetases"/>
    <property type="match status" value="1"/>
</dbReference>
<dbReference type="SUPFAM" id="SSF55826">
    <property type="entry name" value="YbaK/ProRS associated domain"/>
    <property type="match status" value="1"/>
</dbReference>
<dbReference type="PROSITE" id="PS50862">
    <property type="entry name" value="AA_TRNA_LIGASE_II"/>
    <property type="match status" value="1"/>
</dbReference>
<comment type="function">
    <text evidence="1">Catalyzes the attachment of proline to tRNA(Pro) in a two-step reaction: proline is first activated by ATP to form Pro-AMP and then transferred to the acceptor end of tRNA(Pro). As ProRS can inadvertently accommodate and process non-cognate amino acids such as alanine and cysteine, to avoid such errors it has two additional distinct editing activities against alanine. One activity is designated as 'pretransfer' editing and involves the tRNA(Pro)-independent hydrolysis of activated Ala-AMP. The other activity is designated 'posttransfer' editing and involves deacylation of mischarged Ala-tRNA(Pro). The misacylated Cys-tRNA(Pro) is not edited by ProRS.</text>
</comment>
<comment type="catalytic activity">
    <reaction evidence="1">
        <text>tRNA(Pro) + L-proline + ATP = L-prolyl-tRNA(Pro) + AMP + diphosphate</text>
        <dbReference type="Rhea" id="RHEA:14305"/>
        <dbReference type="Rhea" id="RHEA-COMP:9700"/>
        <dbReference type="Rhea" id="RHEA-COMP:9702"/>
        <dbReference type="ChEBI" id="CHEBI:30616"/>
        <dbReference type="ChEBI" id="CHEBI:33019"/>
        <dbReference type="ChEBI" id="CHEBI:60039"/>
        <dbReference type="ChEBI" id="CHEBI:78442"/>
        <dbReference type="ChEBI" id="CHEBI:78532"/>
        <dbReference type="ChEBI" id="CHEBI:456215"/>
        <dbReference type="EC" id="6.1.1.15"/>
    </reaction>
</comment>
<comment type="subunit">
    <text evidence="1">Homodimer.</text>
</comment>
<comment type="subcellular location">
    <subcellularLocation>
        <location evidence="1">Cytoplasm</location>
    </subcellularLocation>
</comment>
<comment type="domain">
    <text evidence="1">Consists of three domains: the N-terminal catalytic domain, the editing domain and the C-terminal anticodon-binding domain.</text>
</comment>
<comment type="similarity">
    <text evidence="1">Belongs to the class-II aminoacyl-tRNA synthetase family. ProS type 1 subfamily.</text>
</comment>
<keyword id="KW-0030">Aminoacyl-tRNA synthetase</keyword>
<keyword id="KW-0067">ATP-binding</keyword>
<keyword id="KW-0963">Cytoplasm</keyword>
<keyword id="KW-0436">Ligase</keyword>
<keyword id="KW-0547">Nucleotide-binding</keyword>
<keyword id="KW-0648">Protein biosynthesis</keyword>
<evidence type="ECO:0000255" key="1">
    <source>
        <dbReference type="HAMAP-Rule" id="MF_01569"/>
    </source>
</evidence>